<reference key="1">
    <citation type="journal article" date="2004" name="Proc. Natl. Acad. Sci. U.S.A.">
        <title>The complete genomic sequence of Nocardia farcinica IFM 10152.</title>
        <authorList>
            <person name="Ishikawa J."/>
            <person name="Yamashita A."/>
            <person name="Mikami Y."/>
            <person name="Hoshino Y."/>
            <person name="Kurita H."/>
            <person name="Hotta K."/>
            <person name="Shiba T."/>
            <person name="Hattori M."/>
        </authorList>
    </citation>
    <scope>NUCLEOTIDE SEQUENCE [LARGE SCALE GENOMIC DNA]</scope>
    <source>
        <strain>IFM 10152</strain>
    </source>
</reference>
<proteinExistence type="inferred from homology"/>
<dbReference type="EMBL" id="AP006618">
    <property type="protein sequence ID" value="BAD54957.1"/>
    <property type="molecule type" value="Genomic_DNA"/>
</dbReference>
<dbReference type="RefSeq" id="WP_011206644.1">
    <property type="nucleotide sequence ID" value="NC_006361.1"/>
</dbReference>
<dbReference type="SMR" id="Q5Z3N4"/>
<dbReference type="STRING" id="247156.NFA_1150"/>
<dbReference type="GeneID" id="61130957"/>
<dbReference type="KEGG" id="nfa:NFA_1150"/>
<dbReference type="eggNOG" id="COG0326">
    <property type="taxonomic scope" value="Bacteria"/>
</dbReference>
<dbReference type="HOGENOM" id="CLU_006684_3_0_11"/>
<dbReference type="OrthoDB" id="9802640at2"/>
<dbReference type="Proteomes" id="UP000006820">
    <property type="component" value="Chromosome"/>
</dbReference>
<dbReference type="GO" id="GO:0005737">
    <property type="term" value="C:cytoplasm"/>
    <property type="evidence" value="ECO:0007669"/>
    <property type="project" value="UniProtKB-SubCell"/>
</dbReference>
<dbReference type="GO" id="GO:0005524">
    <property type="term" value="F:ATP binding"/>
    <property type="evidence" value="ECO:0007669"/>
    <property type="project" value="UniProtKB-UniRule"/>
</dbReference>
<dbReference type="GO" id="GO:0016887">
    <property type="term" value="F:ATP hydrolysis activity"/>
    <property type="evidence" value="ECO:0007669"/>
    <property type="project" value="InterPro"/>
</dbReference>
<dbReference type="GO" id="GO:0140662">
    <property type="term" value="F:ATP-dependent protein folding chaperone"/>
    <property type="evidence" value="ECO:0007669"/>
    <property type="project" value="InterPro"/>
</dbReference>
<dbReference type="GO" id="GO:0051082">
    <property type="term" value="F:unfolded protein binding"/>
    <property type="evidence" value="ECO:0007669"/>
    <property type="project" value="UniProtKB-UniRule"/>
</dbReference>
<dbReference type="CDD" id="cd16927">
    <property type="entry name" value="HATPase_Hsp90-like"/>
    <property type="match status" value="1"/>
</dbReference>
<dbReference type="FunFam" id="3.40.50.11260:FF:000005">
    <property type="entry name" value="Heat shock protein 90"/>
    <property type="match status" value="1"/>
</dbReference>
<dbReference type="FunFam" id="3.30.230.80:FF:000002">
    <property type="entry name" value="Molecular chaperone HtpG"/>
    <property type="match status" value="1"/>
</dbReference>
<dbReference type="FunFam" id="3.30.565.10:FF:000009">
    <property type="entry name" value="Molecular chaperone HtpG"/>
    <property type="match status" value="1"/>
</dbReference>
<dbReference type="Gene3D" id="3.30.230.80">
    <property type="match status" value="1"/>
</dbReference>
<dbReference type="Gene3D" id="3.40.50.11260">
    <property type="match status" value="1"/>
</dbReference>
<dbReference type="Gene3D" id="1.20.120.790">
    <property type="entry name" value="Heat shock protein 90, C-terminal domain"/>
    <property type="match status" value="1"/>
</dbReference>
<dbReference type="Gene3D" id="3.30.565.10">
    <property type="entry name" value="Histidine kinase-like ATPase, C-terminal domain"/>
    <property type="match status" value="1"/>
</dbReference>
<dbReference type="HAMAP" id="MF_00505">
    <property type="entry name" value="HSP90"/>
    <property type="match status" value="1"/>
</dbReference>
<dbReference type="InterPro" id="IPR036890">
    <property type="entry name" value="HATPase_C_sf"/>
</dbReference>
<dbReference type="InterPro" id="IPR037196">
    <property type="entry name" value="HSP90_C"/>
</dbReference>
<dbReference type="InterPro" id="IPR001404">
    <property type="entry name" value="Hsp90_fam"/>
</dbReference>
<dbReference type="InterPro" id="IPR020575">
    <property type="entry name" value="Hsp90_N"/>
</dbReference>
<dbReference type="InterPro" id="IPR020568">
    <property type="entry name" value="Ribosomal_Su5_D2-typ_SF"/>
</dbReference>
<dbReference type="NCBIfam" id="NF003555">
    <property type="entry name" value="PRK05218.1"/>
    <property type="match status" value="1"/>
</dbReference>
<dbReference type="PANTHER" id="PTHR11528">
    <property type="entry name" value="HEAT SHOCK PROTEIN 90 FAMILY MEMBER"/>
    <property type="match status" value="1"/>
</dbReference>
<dbReference type="Pfam" id="PF13589">
    <property type="entry name" value="HATPase_c_3"/>
    <property type="match status" value="1"/>
</dbReference>
<dbReference type="Pfam" id="PF00183">
    <property type="entry name" value="HSP90"/>
    <property type="match status" value="2"/>
</dbReference>
<dbReference type="PIRSF" id="PIRSF002583">
    <property type="entry name" value="Hsp90"/>
    <property type="match status" value="1"/>
</dbReference>
<dbReference type="PRINTS" id="PR00775">
    <property type="entry name" value="HEATSHOCK90"/>
</dbReference>
<dbReference type="SMART" id="SM00387">
    <property type="entry name" value="HATPase_c"/>
    <property type="match status" value="1"/>
</dbReference>
<dbReference type="SUPFAM" id="SSF55874">
    <property type="entry name" value="ATPase domain of HSP90 chaperone/DNA topoisomerase II/histidine kinase"/>
    <property type="match status" value="1"/>
</dbReference>
<dbReference type="SUPFAM" id="SSF110942">
    <property type="entry name" value="HSP90 C-terminal domain"/>
    <property type="match status" value="1"/>
</dbReference>
<dbReference type="SUPFAM" id="SSF54211">
    <property type="entry name" value="Ribosomal protein S5 domain 2-like"/>
    <property type="match status" value="1"/>
</dbReference>
<accession>Q5Z3N4</accession>
<evidence type="ECO:0000255" key="1">
    <source>
        <dbReference type="HAMAP-Rule" id="MF_00505"/>
    </source>
</evidence>
<organism>
    <name type="scientific">Nocardia farcinica (strain IFM 10152)</name>
    <dbReference type="NCBI Taxonomy" id="247156"/>
    <lineage>
        <taxon>Bacteria</taxon>
        <taxon>Bacillati</taxon>
        <taxon>Actinomycetota</taxon>
        <taxon>Actinomycetes</taxon>
        <taxon>Mycobacteriales</taxon>
        <taxon>Nocardiaceae</taxon>
        <taxon>Nocardia</taxon>
    </lineage>
</organism>
<feature type="chain" id="PRO_0000224219" description="Chaperone protein HtpG">
    <location>
        <begin position="1"/>
        <end position="652"/>
    </location>
</feature>
<feature type="region of interest" description="A; substrate-binding" evidence="1">
    <location>
        <begin position="1"/>
        <end position="351"/>
    </location>
</feature>
<feature type="region of interest" description="B" evidence="1">
    <location>
        <begin position="352"/>
        <end position="568"/>
    </location>
</feature>
<feature type="region of interest" description="C" evidence="1">
    <location>
        <begin position="569"/>
        <end position="652"/>
    </location>
</feature>
<protein>
    <recommendedName>
        <fullName evidence="1">Chaperone protein HtpG</fullName>
    </recommendedName>
    <alternativeName>
        <fullName evidence="1">Heat shock protein HtpG</fullName>
    </alternativeName>
    <alternativeName>
        <fullName evidence="1">High temperature protein G</fullName>
    </alternativeName>
</protein>
<sequence>MTEHVEQLEFQAETHQLLELMIHSVYSNKDTFLRELISNASDALDKLRLESFKDKDLHVDTADLHIELEVDKDNRILTVRDNGIGMSRAEVVDLIGTLAKSGTAELRRKLSEAKSEAAAEELIGQFGIGFYSTFMVADKVTLTTRKAGETGGTRWESSAGSSTYTIEDLAEAPQGTAVSLHLKPADEEDHLYDYTQEWKLREIVKKYSDFIAWPIRMQVERTVTEGEGEDKQEKTIVEEQTLNSRKALWTRPRGEVSDEEYKEFYKHVSHAWDEPLEIIPLKAEGTFEYQALLFLPSQAPFDLFTREHKRGVQLYVKRVFIMDNCEELMPEYLRFVKGVVDAQDLSLNVSREILQQDRQIQMIRKRLVKKVLATVKDLQQAEDQSKYQTFWREFGRVLKEGLLSDFDNRETILQVSSFASTHSDSELTTLAQYVERMPEGQDAIYYMTGESRQQVESSPHMEAFKAKGREVLILTDPVDEMWVGSVPEFDGKRFQSIAKGEVDLESEEEKKASEALREQQDKEFADLLSWLGKTLEENIKEVRLTNRLTTSPACLVGDVFDFTPMLERMYRASGQPVPVSKRILELNPTHPLVTGLRDAYDQRKQDADEGKVPELTETAELLYGTAVLAEGGELKDPARFAHILTDRLTRTL</sequence>
<gene>
    <name evidence="1" type="primary">htpG</name>
    <name type="ordered locus">NFA_1150</name>
</gene>
<name>HTPG_NOCFA</name>
<keyword id="KW-0067">ATP-binding</keyword>
<keyword id="KW-0143">Chaperone</keyword>
<keyword id="KW-0963">Cytoplasm</keyword>
<keyword id="KW-0547">Nucleotide-binding</keyword>
<keyword id="KW-1185">Reference proteome</keyword>
<keyword id="KW-0346">Stress response</keyword>
<comment type="function">
    <text evidence="1">Molecular chaperone. Has ATPase activity.</text>
</comment>
<comment type="subunit">
    <text evidence="1">Homodimer.</text>
</comment>
<comment type="subcellular location">
    <subcellularLocation>
        <location evidence="1">Cytoplasm</location>
    </subcellularLocation>
</comment>
<comment type="similarity">
    <text evidence="1">Belongs to the heat shock protein 90 family.</text>
</comment>